<organism>
    <name type="scientific">Saccharomyces cerevisiae (strain ATCC 204508 / S288c)</name>
    <name type="common">Baker's yeast</name>
    <dbReference type="NCBI Taxonomy" id="559292"/>
    <lineage>
        <taxon>Eukaryota</taxon>
        <taxon>Fungi</taxon>
        <taxon>Dikarya</taxon>
        <taxon>Ascomycota</taxon>
        <taxon>Saccharomycotina</taxon>
        <taxon>Saccharomycetes</taxon>
        <taxon>Saccharomycetales</taxon>
        <taxon>Saccharomycetaceae</taxon>
        <taxon>Saccharomyces</taxon>
    </lineage>
</organism>
<sequence length="976" mass="111035">MKLKSVFRSVLKYRKTNLSLLLLITYSIITLLYIFDHERYKLNLPKEDEHPEFNDLLETAWGDLQIITASFHPYTSKENDKVHDYLLKRVLEITGNSSFASVSDDKESERSILFQQQDPFNESSRFSRVTYFESSNILVKLEGKNPEEEGLLLSAHFDSVPTGYGATDDGMGVVSLLANLKYHIKHRPNRTLIFNFNNNEEFGLLGASTYFDHSWSNLTKYVINLEGTGAGGKAVLFRTSDTSTARIYQQSVKENPFGNSIYQQGFYSRYVRSETDYKIYEENGMRGWDVAFYKPRNLYHTIKDSIQYTSKASLWHMLHTSLQLSAYVASNSLDTADQTPACYFDFIGLKFFVISAKTLFYWNCIFLLVSPVVAIGLYLISRDRMTWKSYSWLSWTRFPLSLAAGIIVQKLFSNDIIRSNPLTFSRNYFWPISAFFTQVIFTSYVLINCSNFFFPCADMKSLSIIELFIILWTILLFTSKLLYSSDYRYTGLYPLSIFFLLSTIAAILRLLALALGMRTRKRLGRECRDHHSNYSSHSQIDMERDGQENLEQPQDQLTSSQDDQASIQDDNVSTTSAGPSHNVDEDHGMDSSSQQHDERVPLLKGSNSMEEGLSTRENSLKLEYTDYAWIIQFLLIVPIPSFILFNSVDVIMDALNHTVQEGSKATFDVLRFGMVGSILIALPILPFFYKVNYITISLTALLFLISASKTLLVHPFTNSNPLKVRFSQNIDLSQGNAASVHVLGREGNFLKPMLQDLPSIKYSSTHINCTSVTNGMELCMYDGMQPNLLSTNGNTNISSMVKVHVLHNNRNSTERSPYEPIVAELLLEVKENRACTLTFESRHQAKSPVREITVYQKKNSAPQKANITKTIKSASGINELQLHKLDFDQETYHIGVQWFPKLLTDGNVEDDKLGTKDELSVSISCYWGEYDSESVVNGTAVRKIPAFDELINYAPLSFSFTNEQKGLVIVKDAIIL</sequence>
<reference key="1">
    <citation type="journal article" date="1994" name="Yeast">
        <title>Sequence analysis of a 31 kb DNA fragment from the right arm of Saccharomyces cerevisiae chromosome II.</title>
        <authorList>
            <person name="van der Aart Q.J.M."/>
            <person name="Barthe C."/>
            <person name="Doignon F."/>
            <person name="Aigle M."/>
            <person name="Crouzet M."/>
            <person name="Steensma H.Y."/>
        </authorList>
    </citation>
    <scope>NUCLEOTIDE SEQUENCE [GENOMIC DNA]</scope>
    <source>
        <strain>ATCC 204508 / S288c</strain>
    </source>
</reference>
<reference key="2">
    <citation type="journal article" date="1994" name="EMBO J.">
        <title>Complete DNA sequence of yeast chromosome II.</title>
        <authorList>
            <person name="Feldmann H."/>
            <person name="Aigle M."/>
            <person name="Aljinovic G."/>
            <person name="Andre B."/>
            <person name="Baclet M.C."/>
            <person name="Barthe C."/>
            <person name="Baur A."/>
            <person name="Becam A.-M."/>
            <person name="Biteau N."/>
            <person name="Boles E."/>
            <person name="Brandt T."/>
            <person name="Brendel M."/>
            <person name="Brueckner M."/>
            <person name="Bussereau F."/>
            <person name="Christiansen C."/>
            <person name="Contreras R."/>
            <person name="Crouzet M."/>
            <person name="Cziepluch C."/>
            <person name="Demolis N."/>
            <person name="Delaveau T."/>
            <person name="Doignon F."/>
            <person name="Domdey H."/>
            <person name="Duesterhus S."/>
            <person name="Dubois E."/>
            <person name="Dujon B."/>
            <person name="El Bakkoury M."/>
            <person name="Entian K.-D."/>
            <person name="Feuermann M."/>
            <person name="Fiers W."/>
            <person name="Fobo G.M."/>
            <person name="Fritz C."/>
            <person name="Gassenhuber J."/>
            <person name="Glansdorff N."/>
            <person name="Goffeau A."/>
            <person name="Grivell L.A."/>
            <person name="de Haan M."/>
            <person name="Hein C."/>
            <person name="Herbert C.J."/>
            <person name="Hollenberg C.P."/>
            <person name="Holmstroem K."/>
            <person name="Jacq C."/>
            <person name="Jacquet M."/>
            <person name="Jauniaux J.-C."/>
            <person name="Jonniaux J.-L."/>
            <person name="Kallesoee T."/>
            <person name="Kiesau P."/>
            <person name="Kirchrath L."/>
            <person name="Koetter P."/>
            <person name="Korol S."/>
            <person name="Liebl S."/>
            <person name="Logghe M."/>
            <person name="Lohan A.J.E."/>
            <person name="Louis E.J."/>
            <person name="Li Z.Y."/>
            <person name="Maat M.J."/>
            <person name="Mallet L."/>
            <person name="Mannhaupt G."/>
            <person name="Messenguy F."/>
            <person name="Miosga T."/>
            <person name="Molemans F."/>
            <person name="Mueller S."/>
            <person name="Nasr F."/>
            <person name="Obermaier B."/>
            <person name="Perea J."/>
            <person name="Pierard A."/>
            <person name="Piravandi E."/>
            <person name="Pohl F.M."/>
            <person name="Pohl T.M."/>
            <person name="Potier S."/>
            <person name="Proft M."/>
            <person name="Purnelle B."/>
            <person name="Ramezani Rad M."/>
            <person name="Rieger M."/>
            <person name="Rose M."/>
            <person name="Schaaff-Gerstenschlaeger I."/>
            <person name="Scherens B."/>
            <person name="Schwarzlose C."/>
            <person name="Skala J."/>
            <person name="Slonimski P.P."/>
            <person name="Smits P.H.M."/>
            <person name="Souciet J.-L."/>
            <person name="Steensma H.Y."/>
            <person name="Stucka R."/>
            <person name="Urrestarazu L.A."/>
            <person name="van der Aart Q.J.M."/>
            <person name="Van Dyck L."/>
            <person name="Vassarotti A."/>
            <person name="Vetter I."/>
            <person name="Vierendeels F."/>
            <person name="Vissers S."/>
            <person name="Wagner G."/>
            <person name="de Wergifosse P."/>
            <person name="Wolfe K.H."/>
            <person name="Zagulski M."/>
            <person name="Zimmermann F.K."/>
            <person name="Mewes H.-W."/>
            <person name="Kleine K."/>
        </authorList>
    </citation>
    <scope>NUCLEOTIDE SEQUENCE [LARGE SCALE GENOMIC DNA]</scope>
    <source>
        <strain>ATCC 204508 / S288c</strain>
    </source>
</reference>
<reference key="3">
    <citation type="journal article" date="2014" name="G3 (Bethesda)">
        <title>The reference genome sequence of Saccharomyces cerevisiae: Then and now.</title>
        <authorList>
            <person name="Engel S.R."/>
            <person name="Dietrich F.S."/>
            <person name="Fisk D.G."/>
            <person name="Binkley G."/>
            <person name="Balakrishnan R."/>
            <person name="Costanzo M.C."/>
            <person name="Dwight S.S."/>
            <person name="Hitz B.C."/>
            <person name="Karra K."/>
            <person name="Nash R.S."/>
            <person name="Weng S."/>
            <person name="Wong E.D."/>
            <person name="Lloyd P."/>
            <person name="Skrzypek M.S."/>
            <person name="Miyasato S.R."/>
            <person name="Simison M."/>
            <person name="Cherry J.M."/>
        </authorList>
    </citation>
    <scope>GENOME REANNOTATION</scope>
    <scope>SEQUENCE REVISION TO 832</scope>
    <source>
        <strain>ATCC 204508 / S288c</strain>
    </source>
</reference>
<reference key="4">
    <citation type="journal article" date="2003" name="Genome Biol.">
        <title>Reinvestigation of the Saccharomyces cerevisiae genome annotation by comparison to the genome of a related fungus: Ashbya gossypii.</title>
        <authorList>
            <person name="Brachat S."/>
            <person name="Dietrich F.S."/>
            <person name="Voegeli S."/>
            <person name="Zhang Z."/>
            <person name="Stuart L."/>
            <person name="Lerch A."/>
            <person name="Gates K."/>
            <person name="Gaffney T.D."/>
            <person name="Philippsen P."/>
        </authorList>
    </citation>
    <scope>NUCLEOTIDE SEQUENCE [GENOMIC DNA] OF 381-503</scope>
    <source>
        <strain>ATCC 204508 / S288c</strain>
    </source>
</reference>
<reference key="5">
    <citation type="journal article" date="2007" name="J. Proteome Res.">
        <title>Large-scale phosphorylation analysis of alpha-factor-arrested Saccharomyces cerevisiae.</title>
        <authorList>
            <person name="Li X."/>
            <person name="Gerber S.A."/>
            <person name="Rudner A.D."/>
            <person name="Beausoleil S.A."/>
            <person name="Haas W."/>
            <person name="Villen J."/>
            <person name="Elias J.E."/>
            <person name="Gygi S.P."/>
        </authorList>
    </citation>
    <scope>IDENTIFICATION BY MASS SPECTROMETRY [LARGE SCALE ANALYSIS]</scope>
    <source>
        <strain>ADR376</strain>
    </source>
</reference>
<reference key="6">
    <citation type="journal article" date="2008" name="Mol. Cell. Proteomics">
        <title>A multidimensional chromatography technology for in-depth phosphoproteome analysis.</title>
        <authorList>
            <person name="Albuquerque C.P."/>
            <person name="Smolka M.B."/>
            <person name="Payne S.H."/>
            <person name="Bafna V."/>
            <person name="Eng J."/>
            <person name="Zhou H."/>
        </authorList>
    </citation>
    <scope>IDENTIFICATION BY MASS SPECTROMETRY [LARGE SCALE ANALYSIS]</scope>
</reference>
<reference key="7">
    <citation type="journal article" date="2009" name="Science">
        <title>Global analysis of Cdk1 substrate phosphorylation sites provides insights into evolution.</title>
        <authorList>
            <person name="Holt L.J."/>
            <person name="Tuch B.B."/>
            <person name="Villen J."/>
            <person name="Johnson A.D."/>
            <person name="Gygi S.P."/>
            <person name="Morgan D.O."/>
        </authorList>
    </citation>
    <scope>IDENTIFICATION BY MASS SPECTROMETRY [LARGE SCALE ANALYSIS]</scope>
</reference>
<reference key="8">
    <citation type="journal article" date="2012" name="Proc. Natl. Acad. Sci. U.S.A.">
        <title>N-terminal acetylome analyses and functional insights of the N-terminal acetyltransferase NatB.</title>
        <authorList>
            <person name="Van Damme P."/>
            <person name="Lasa M."/>
            <person name="Polevoda B."/>
            <person name="Gazquez C."/>
            <person name="Elosegui-Artola A."/>
            <person name="Kim D.S."/>
            <person name="De Juan-Pardo E."/>
            <person name="Demeyer K."/>
            <person name="Hole K."/>
            <person name="Larrea E."/>
            <person name="Timmerman E."/>
            <person name="Prieto J."/>
            <person name="Arnesen T."/>
            <person name="Sherman F."/>
            <person name="Gevaert K."/>
            <person name="Aldabe R."/>
        </authorList>
    </citation>
    <scope>IDENTIFICATION BY MASS SPECTROMETRY [LARGE SCALE ANALYSIS]</scope>
</reference>
<reference key="9">
    <citation type="journal article" date="2013" name="FEMS Yeast Res.">
        <title>Characterization of an M28 metalloprotease family member residing in the yeast vacuole.</title>
        <authorList>
            <person name="Hecht K.A."/>
            <person name="Wytiaz V.A."/>
            <person name="Ast T."/>
            <person name="Schuldiner M."/>
            <person name="Brodsky J.L."/>
        </authorList>
    </citation>
    <scope>FUNCTION</scope>
    <scope>SUBCELLULAR LOCATION</scope>
    <scope>TOPOLOGY</scope>
    <scope>GLYCOSYLATION</scope>
</reference>
<gene>
    <name evidence="6" type="primary">PFF1</name>
    <name evidence="9" type="ordered locus">YBR074W</name>
    <name type="ORF">YBR0718</name>
    <name type="ORF">YBR0719</name>
    <name type="ORF">YBR075W</name>
</gene>
<protein>
    <recommendedName>
        <fullName evidence="8">Vacuolar membrane protease</fullName>
        <ecNumber evidence="7">3.4.-.-</ecNumber>
    </recommendedName>
    <alternativeName>
        <fullName evidence="6">FXNA-related family protease 1</fullName>
    </alternativeName>
</protein>
<feature type="chain" id="PRO_0000174140" description="Vacuolar membrane protease">
    <location>
        <begin position="1"/>
        <end position="976"/>
    </location>
</feature>
<feature type="topological domain" description="Cytoplasmic" evidence="5">
    <location>
        <begin position="1"/>
        <end position="15"/>
    </location>
</feature>
<feature type="transmembrane region" description="Helical; Name=1" evidence="2">
    <location>
        <begin position="16"/>
        <end position="36"/>
    </location>
</feature>
<feature type="topological domain" description="Vacuolar" evidence="5">
    <location>
        <begin position="37"/>
        <end position="359"/>
    </location>
</feature>
<feature type="transmembrane region" description="Helical; Name=2" evidence="2">
    <location>
        <begin position="360"/>
        <end position="380"/>
    </location>
</feature>
<feature type="topological domain" description="Cytoplasmic" evidence="8">
    <location>
        <begin position="381"/>
        <end position="392"/>
    </location>
</feature>
<feature type="transmembrane region" description="Helical; Name=3" evidence="2">
    <location>
        <begin position="393"/>
        <end position="412"/>
    </location>
</feature>
<feature type="topological domain" description="Vacuolar" evidence="8">
    <location>
        <begin position="413"/>
        <end position="428"/>
    </location>
</feature>
<feature type="transmembrane region" description="Helical; Name=4" evidence="2">
    <location>
        <begin position="429"/>
        <end position="449"/>
    </location>
</feature>
<feature type="topological domain" description="Cytoplasmic" evidence="8">
    <location>
        <begin position="450"/>
        <end position="461"/>
    </location>
</feature>
<feature type="transmembrane region" description="Helical; Name=5" evidence="2">
    <location>
        <begin position="462"/>
        <end position="482"/>
    </location>
</feature>
<feature type="topological domain" description="Vacuolar" evidence="8">
    <location>
        <begin position="483"/>
        <end position="496"/>
    </location>
</feature>
<feature type="transmembrane region" description="Helical; Name=6" evidence="2">
    <location>
        <begin position="497"/>
        <end position="517"/>
    </location>
</feature>
<feature type="topological domain" description="Cytoplasmic" evidence="8">
    <location>
        <begin position="518"/>
        <end position="627"/>
    </location>
</feature>
<feature type="transmembrane region" description="Helical; Name=7" evidence="2">
    <location>
        <begin position="628"/>
        <end position="648"/>
    </location>
</feature>
<feature type="topological domain" description="Vacuolar" evidence="8">
    <location>
        <begin position="649"/>
        <end position="668"/>
    </location>
</feature>
<feature type="transmembrane region" description="Helical; Name=8" evidence="2">
    <location>
        <begin position="669"/>
        <end position="689"/>
    </location>
</feature>
<feature type="topological domain" description="Cytoplasmic" evidence="8">
    <location>
        <begin position="690"/>
        <end position="692"/>
    </location>
</feature>
<feature type="transmembrane region" description="Helical; Name=9" evidence="2">
    <location>
        <begin position="693"/>
        <end position="713"/>
    </location>
</feature>
<feature type="topological domain" description="Vacuolar" evidence="5">
    <location>
        <begin position="714"/>
        <end position="976"/>
    </location>
</feature>
<feature type="region of interest" description="Disordered" evidence="4">
    <location>
        <begin position="528"/>
        <end position="610"/>
    </location>
</feature>
<feature type="compositionally biased region" description="Polar residues" evidence="4">
    <location>
        <begin position="549"/>
        <end position="558"/>
    </location>
</feature>
<feature type="compositionally biased region" description="Low complexity" evidence="4">
    <location>
        <begin position="559"/>
        <end position="570"/>
    </location>
</feature>
<feature type="compositionally biased region" description="Basic and acidic residues" evidence="4">
    <location>
        <begin position="582"/>
        <end position="601"/>
    </location>
</feature>
<feature type="active site" description="Proton acceptor" evidence="1">
    <location>
        <position position="200"/>
    </location>
</feature>
<feature type="binding site" evidence="1">
    <location>
        <position position="156"/>
    </location>
    <ligand>
        <name>Zn(2+)</name>
        <dbReference type="ChEBI" id="CHEBI:29105"/>
        <label>1</label>
        <note>catalytic</note>
    </ligand>
</feature>
<feature type="binding site" evidence="1">
    <location>
        <position position="168"/>
    </location>
    <ligand>
        <name>Zn(2+)</name>
        <dbReference type="ChEBI" id="CHEBI:29105"/>
        <label>1</label>
        <note>catalytic</note>
    </ligand>
</feature>
<feature type="binding site" evidence="1">
    <location>
        <position position="168"/>
    </location>
    <ligand>
        <name>Zn(2+)</name>
        <dbReference type="ChEBI" id="CHEBI:29105"/>
        <label>2</label>
        <note>catalytic</note>
    </ligand>
</feature>
<feature type="binding site" evidence="1">
    <location>
        <position position="201"/>
    </location>
    <ligand>
        <name>Zn(2+)</name>
        <dbReference type="ChEBI" id="CHEBI:29105"/>
        <label>2</label>
        <note>catalytic</note>
    </ligand>
</feature>
<feature type="binding site" evidence="1">
    <location>
        <position position="226"/>
    </location>
    <ligand>
        <name>Zn(2+)</name>
        <dbReference type="ChEBI" id="CHEBI:29105"/>
        <label>1</label>
        <note>catalytic</note>
    </ligand>
</feature>
<feature type="binding site" evidence="1">
    <location>
        <position position="300"/>
    </location>
    <ligand>
        <name>Zn(2+)</name>
        <dbReference type="ChEBI" id="CHEBI:29105"/>
        <label>2</label>
        <note>catalytic</note>
    </ligand>
</feature>
<feature type="site" description="Transition state stabilizer" evidence="1">
    <location>
        <position position="299"/>
    </location>
</feature>
<feature type="glycosylation site" description="N-linked (GlcNAc...) asparagine" evidence="3">
    <location>
        <position position="96"/>
    </location>
</feature>
<feature type="glycosylation site" description="N-linked (GlcNAc...) asparagine" evidence="3">
    <location>
        <position position="121"/>
    </location>
</feature>
<feature type="glycosylation site" description="N-linked (GlcNAc...) asparagine" evidence="3">
    <location>
        <position position="189"/>
    </location>
</feature>
<feature type="glycosylation site" description="N-linked (GlcNAc...) asparagine" evidence="3">
    <location>
        <position position="217"/>
    </location>
</feature>
<feature type="glycosylation site" description="N-linked (GlcNAc...) asparagine" evidence="3">
    <location>
        <position position="656"/>
    </location>
</feature>
<feature type="glycosylation site" description="N-linked (GlcNAc...) asparagine" evidence="3">
    <location>
        <position position="768"/>
    </location>
</feature>
<feature type="glycosylation site" description="N-linked (GlcNAc...) asparagine" evidence="3">
    <location>
        <position position="796"/>
    </location>
</feature>
<feature type="glycosylation site" description="N-linked (GlcNAc...) asparagine" evidence="3">
    <location>
        <position position="811"/>
    </location>
</feature>
<feature type="glycosylation site" description="N-linked (GlcNAc...) asparagine" evidence="3">
    <location>
        <position position="866"/>
    </location>
</feature>
<feature type="glycosylation site" description="N-linked (GlcNAc...) asparagine" evidence="3">
    <location>
        <position position="937"/>
    </location>
</feature>
<feature type="sequence conflict" description="In Ref. 1; CAA53932 and 2; CAA85019." evidence="7" ref="1 2">
    <original>N</original>
    <variation>F</variation>
    <location>
        <position position="832"/>
    </location>
</feature>
<name>PFF1_YEAST</name>
<keyword id="KW-0325">Glycoprotein</keyword>
<keyword id="KW-0378">Hydrolase</keyword>
<keyword id="KW-0472">Membrane</keyword>
<keyword id="KW-0479">Metal-binding</keyword>
<keyword id="KW-0482">Metalloprotease</keyword>
<keyword id="KW-0645">Protease</keyword>
<keyword id="KW-1185">Reference proteome</keyword>
<keyword id="KW-0812">Transmembrane</keyword>
<keyword id="KW-1133">Transmembrane helix</keyword>
<keyword id="KW-0926">Vacuole</keyword>
<keyword id="KW-0862">Zinc</keyword>
<evidence type="ECO:0000250" key="1">
    <source>
        <dbReference type="UniProtKB" id="P80561"/>
    </source>
</evidence>
<evidence type="ECO:0000255" key="2"/>
<evidence type="ECO:0000255" key="3">
    <source>
        <dbReference type="PROSITE-ProRule" id="PRU00498"/>
    </source>
</evidence>
<evidence type="ECO:0000256" key="4">
    <source>
        <dbReference type="SAM" id="MobiDB-lite"/>
    </source>
</evidence>
<evidence type="ECO:0000269" key="5">
    <source>
    </source>
</evidence>
<evidence type="ECO:0000303" key="6">
    <source>
    </source>
</evidence>
<evidence type="ECO:0000305" key="7"/>
<evidence type="ECO:0000305" key="8">
    <source>
    </source>
</evidence>
<evidence type="ECO:0000312" key="9">
    <source>
        <dbReference type="SGD" id="S000000278"/>
    </source>
</evidence>
<comment type="function">
    <text evidence="5">May be involved in vacuolar sorting and osmoregulation.</text>
</comment>
<comment type="cofactor">
    <cofactor evidence="1">
        <name>Zn(2+)</name>
        <dbReference type="ChEBI" id="CHEBI:29105"/>
    </cofactor>
    <text evidence="1">Binds 2 Zn(2+) ions per subunit.</text>
</comment>
<comment type="subcellular location">
    <subcellularLocation>
        <location evidence="5">Vacuole membrane</location>
        <topology evidence="2">Multi-pass membrane protein</topology>
    </subcellularLocation>
</comment>
<comment type="PTM">
    <text evidence="5">N-glycosylated.</text>
</comment>
<comment type="similarity">
    <text evidence="7">Belongs to the peptidase M28 family.</text>
</comment>
<comment type="sequence caution" evidence="7">
    <conflict type="frameshift">
        <sequence resource="EMBL-CDS" id="CAA53931"/>
    </conflict>
</comment>
<comment type="sequence caution" evidence="7">
    <conflict type="frameshift">
        <sequence resource="EMBL-CDS" id="CAA53932"/>
    </conflict>
</comment>
<comment type="sequence caution" evidence="7">
    <conflict type="frameshift">
        <sequence resource="EMBL-CDS" id="CAA85018"/>
    </conflict>
</comment>
<comment type="sequence caution" evidence="7">
    <conflict type="frameshift">
        <sequence resource="EMBL-CDS" id="CAA85019"/>
    </conflict>
</comment>
<accession>P38244</accession>
<accession>D6VQ74</accession>
<accession>P38245</accession>
<accession>Q86ZS2</accession>
<proteinExistence type="evidence at protein level"/>
<dbReference type="EC" id="3.4.-.-" evidence="7"/>
<dbReference type="EMBL" id="X76294">
    <property type="protein sequence ID" value="CAA53931.1"/>
    <property type="status" value="ALT_FRAME"/>
    <property type="molecule type" value="Genomic_DNA"/>
</dbReference>
<dbReference type="EMBL" id="X76294">
    <property type="protein sequence ID" value="CAA53932.1"/>
    <property type="status" value="ALT_FRAME"/>
    <property type="molecule type" value="Genomic_DNA"/>
</dbReference>
<dbReference type="EMBL" id="Z35943">
    <property type="protein sequence ID" value="CAA85018.1"/>
    <property type="status" value="ALT_FRAME"/>
    <property type="molecule type" value="Genomic_DNA"/>
</dbReference>
<dbReference type="EMBL" id="Z35944">
    <property type="protein sequence ID" value="CAA85019.1"/>
    <property type="status" value="ALT_FRAME"/>
    <property type="molecule type" value="Genomic_DNA"/>
</dbReference>
<dbReference type="EMBL" id="AY260891">
    <property type="protein sequence ID" value="AAP21759.1"/>
    <property type="molecule type" value="Genomic_DNA"/>
</dbReference>
<dbReference type="EMBL" id="BK006936">
    <property type="protein sequence ID" value="DAA07194.2"/>
    <property type="molecule type" value="Genomic_DNA"/>
</dbReference>
<dbReference type="PIR" id="S45467">
    <property type="entry name" value="S45467"/>
</dbReference>
<dbReference type="PIR" id="S45470">
    <property type="entry name" value="S45470"/>
</dbReference>
<dbReference type="RefSeq" id="NP_009630.3">
    <property type="nucleotide sequence ID" value="NM_001178422.2"/>
</dbReference>
<dbReference type="SMR" id="P38244"/>
<dbReference type="BioGRID" id="32777">
    <property type="interactions" value="85"/>
</dbReference>
<dbReference type="DIP" id="DIP-4914N"/>
<dbReference type="FunCoup" id="P38244">
    <property type="interactions" value="30"/>
</dbReference>
<dbReference type="IntAct" id="P38244">
    <property type="interactions" value="26"/>
</dbReference>
<dbReference type="STRING" id="4932.YBR074W"/>
<dbReference type="MEROPS" id="M28.A05"/>
<dbReference type="GlyCosmos" id="P38244">
    <property type="glycosylation" value="10 sites, No reported glycans"/>
</dbReference>
<dbReference type="GlyGen" id="P38244">
    <property type="glycosylation" value="10 sites"/>
</dbReference>
<dbReference type="iPTMnet" id="P38244"/>
<dbReference type="PaxDb" id="4932-YBR074W"/>
<dbReference type="PeptideAtlas" id="P38244"/>
<dbReference type="EnsemblFungi" id="YBR074W_mRNA">
    <property type="protein sequence ID" value="YBR074W"/>
    <property type="gene ID" value="YBR074W"/>
</dbReference>
<dbReference type="GeneID" id="852366"/>
<dbReference type="KEGG" id="sce:YBR074W"/>
<dbReference type="AGR" id="SGD:S000000278"/>
<dbReference type="SGD" id="S000000278">
    <property type="gene designation" value="PFF1"/>
</dbReference>
<dbReference type="VEuPathDB" id="FungiDB:YBR074W"/>
<dbReference type="eggNOG" id="KOG2194">
    <property type="taxonomic scope" value="Eukaryota"/>
</dbReference>
<dbReference type="GeneTree" id="ENSGT00530000063839"/>
<dbReference type="HOGENOM" id="CLU_006412_1_0_1"/>
<dbReference type="InParanoid" id="P38244"/>
<dbReference type="OMA" id="TPWPVTI"/>
<dbReference type="OrthoDB" id="76293at2759"/>
<dbReference type="BioCyc" id="YEAST:G3O-29043-MONOMER"/>
<dbReference type="BioGRID-ORCS" id="852366">
    <property type="hits" value="1 hit in 10 CRISPR screens"/>
</dbReference>
<dbReference type="PRO" id="PR:P38244"/>
<dbReference type="Proteomes" id="UP000002311">
    <property type="component" value="Chromosome II"/>
</dbReference>
<dbReference type="RNAct" id="P38244">
    <property type="molecule type" value="protein"/>
</dbReference>
<dbReference type="GO" id="GO:0000329">
    <property type="term" value="C:fungal-type vacuole membrane"/>
    <property type="evidence" value="ECO:0000314"/>
    <property type="project" value="SGD"/>
</dbReference>
<dbReference type="GO" id="GO:0046872">
    <property type="term" value="F:metal ion binding"/>
    <property type="evidence" value="ECO:0007669"/>
    <property type="project" value="UniProtKB-KW"/>
</dbReference>
<dbReference type="GO" id="GO:0008235">
    <property type="term" value="F:metalloexopeptidase activity"/>
    <property type="evidence" value="ECO:0007669"/>
    <property type="project" value="InterPro"/>
</dbReference>
<dbReference type="GO" id="GO:0006508">
    <property type="term" value="P:proteolysis"/>
    <property type="evidence" value="ECO:0000318"/>
    <property type="project" value="GO_Central"/>
</dbReference>
<dbReference type="CDD" id="cd03875">
    <property type="entry name" value="M28_Fxna_like"/>
    <property type="match status" value="1"/>
</dbReference>
<dbReference type="FunFam" id="3.40.630.10:FF:000057">
    <property type="entry name" value="Vacuolar membrane protease"/>
    <property type="match status" value="1"/>
</dbReference>
<dbReference type="Gene3D" id="3.40.630.10">
    <property type="entry name" value="Zn peptidases"/>
    <property type="match status" value="1"/>
</dbReference>
<dbReference type="InterPro" id="IPR048024">
    <property type="entry name" value="Fxna-like_M28_dom"/>
</dbReference>
<dbReference type="InterPro" id="IPR045175">
    <property type="entry name" value="M28_fam"/>
</dbReference>
<dbReference type="InterPro" id="IPR007484">
    <property type="entry name" value="Peptidase_M28"/>
</dbReference>
<dbReference type="InterPro" id="IPR053975">
    <property type="entry name" value="PFF1_C"/>
</dbReference>
<dbReference type="InterPro" id="IPR053976">
    <property type="entry name" value="PFF1_TM"/>
</dbReference>
<dbReference type="PANTHER" id="PTHR12147">
    <property type="entry name" value="METALLOPEPTIDASE M28 FAMILY MEMBER"/>
    <property type="match status" value="1"/>
</dbReference>
<dbReference type="PANTHER" id="PTHR12147:SF58">
    <property type="entry name" value="VACUOLAR MEMBRANE PROTEASE"/>
    <property type="match status" value="1"/>
</dbReference>
<dbReference type="Pfam" id="PF04389">
    <property type="entry name" value="Peptidase_M28"/>
    <property type="match status" value="1"/>
</dbReference>
<dbReference type="Pfam" id="PF22250">
    <property type="entry name" value="PFF1_C"/>
    <property type="match status" value="1"/>
</dbReference>
<dbReference type="Pfam" id="PF22251">
    <property type="entry name" value="PFF1_TM"/>
    <property type="match status" value="1"/>
</dbReference>
<dbReference type="SUPFAM" id="SSF53187">
    <property type="entry name" value="Zn-dependent exopeptidases"/>
    <property type="match status" value="1"/>
</dbReference>